<evidence type="ECO:0000255" key="1">
    <source>
        <dbReference type="HAMAP-Rule" id="MF_00227"/>
    </source>
</evidence>
<keyword id="KW-0255">Endonuclease</keyword>
<keyword id="KW-0378">Hydrolase</keyword>
<keyword id="KW-0540">Nuclease</keyword>
<keyword id="KW-0694">RNA-binding</keyword>
<keyword id="KW-0819">tRNA processing</keyword>
<comment type="function">
    <text evidence="1">RNaseP catalyzes the removal of the 5'-leader sequence from pre-tRNA to produce the mature 5'-terminus. It can also cleave other RNA substrates such as 4.5S RNA. The protein component plays an auxiliary but essential role in vivo by binding to the 5'-leader sequence and broadening the substrate specificity of the ribozyme.</text>
</comment>
<comment type="catalytic activity">
    <reaction evidence="1">
        <text>Endonucleolytic cleavage of RNA, removing 5'-extranucleotides from tRNA precursor.</text>
        <dbReference type="EC" id="3.1.26.5"/>
    </reaction>
</comment>
<comment type="subunit">
    <text evidence="1">Consists of a catalytic RNA component (M1 or rnpB) and a protein subunit.</text>
</comment>
<comment type="similarity">
    <text evidence="1">Belongs to the RnpA family.</text>
</comment>
<name>RNPA_STAA9</name>
<accession>A5IWD8</accession>
<reference key="1">
    <citation type="submission" date="2007-05" db="EMBL/GenBank/DDBJ databases">
        <title>Complete sequence of chromosome of Staphylococcus aureus subsp. aureus JH9.</title>
        <authorList>
            <consortium name="US DOE Joint Genome Institute"/>
            <person name="Copeland A."/>
            <person name="Lucas S."/>
            <person name="Lapidus A."/>
            <person name="Barry K."/>
            <person name="Detter J.C."/>
            <person name="Glavina del Rio T."/>
            <person name="Hammon N."/>
            <person name="Israni S."/>
            <person name="Pitluck S."/>
            <person name="Chain P."/>
            <person name="Malfatti S."/>
            <person name="Shin M."/>
            <person name="Vergez L."/>
            <person name="Schmutz J."/>
            <person name="Larimer F."/>
            <person name="Land M."/>
            <person name="Hauser L."/>
            <person name="Kyrpides N."/>
            <person name="Kim E."/>
            <person name="Tomasz A."/>
            <person name="Richardson P."/>
        </authorList>
    </citation>
    <scope>NUCLEOTIDE SEQUENCE [LARGE SCALE GENOMIC DNA]</scope>
    <source>
        <strain>JH9</strain>
    </source>
</reference>
<dbReference type="EC" id="3.1.26.5" evidence="1"/>
<dbReference type="EMBL" id="CP000703">
    <property type="protein sequence ID" value="ABQ50511.1"/>
    <property type="molecule type" value="Genomic_DNA"/>
</dbReference>
<dbReference type="RefSeq" id="WP_001789343.1">
    <property type="nucleotide sequence ID" value="NC_009487.1"/>
</dbReference>
<dbReference type="SMR" id="A5IWD8"/>
<dbReference type="KEGG" id="saj:SaurJH9_2735"/>
<dbReference type="HOGENOM" id="CLU_117179_9_1_9"/>
<dbReference type="GO" id="GO:0030677">
    <property type="term" value="C:ribonuclease P complex"/>
    <property type="evidence" value="ECO:0007669"/>
    <property type="project" value="TreeGrafter"/>
</dbReference>
<dbReference type="GO" id="GO:0042781">
    <property type="term" value="F:3'-tRNA processing endoribonuclease activity"/>
    <property type="evidence" value="ECO:0007669"/>
    <property type="project" value="TreeGrafter"/>
</dbReference>
<dbReference type="GO" id="GO:0004526">
    <property type="term" value="F:ribonuclease P activity"/>
    <property type="evidence" value="ECO:0007669"/>
    <property type="project" value="UniProtKB-UniRule"/>
</dbReference>
<dbReference type="GO" id="GO:0000049">
    <property type="term" value="F:tRNA binding"/>
    <property type="evidence" value="ECO:0007669"/>
    <property type="project" value="UniProtKB-UniRule"/>
</dbReference>
<dbReference type="GO" id="GO:0001682">
    <property type="term" value="P:tRNA 5'-leader removal"/>
    <property type="evidence" value="ECO:0007669"/>
    <property type="project" value="UniProtKB-UniRule"/>
</dbReference>
<dbReference type="FunFam" id="3.30.230.10:FF:000021">
    <property type="entry name" value="Ribonuclease P protein component"/>
    <property type="match status" value="1"/>
</dbReference>
<dbReference type="Gene3D" id="3.30.230.10">
    <property type="match status" value="1"/>
</dbReference>
<dbReference type="HAMAP" id="MF_00227">
    <property type="entry name" value="RNase_P"/>
    <property type="match status" value="1"/>
</dbReference>
<dbReference type="InterPro" id="IPR020568">
    <property type="entry name" value="Ribosomal_Su5_D2-typ_SF"/>
</dbReference>
<dbReference type="InterPro" id="IPR014721">
    <property type="entry name" value="Ribsml_uS5_D2-typ_fold_subgr"/>
</dbReference>
<dbReference type="InterPro" id="IPR000100">
    <property type="entry name" value="RNase_P"/>
</dbReference>
<dbReference type="InterPro" id="IPR020539">
    <property type="entry name" value="RNase_P_CS"/>
</dbReference>
<dbReference type="NCBIfam" id="TIGR00188">
    <property type="entry name" value="rnpA"/>
    <property type="match status" value="1"/>
</dbReference>
<dbReference type="PANTHER" id="PTHR33992">
    <property type="entry name" value="RIBONUCLEASE P PROTEIN COMPONENT"/>
    <property type="match status" value="1"/>
</dbReference>
<dbReference type="PANTHER" id="PTHR33992:SF1">
    <property type="entry name" value="RIBONUCLEASE P PROTEIN COMPONENT"/>
    <property type="match status" value="1"/>
</dbReference>
<dbReference type="Pfam" id="PF00825">
    <property type="entry name" value="Ribonuclease_P"/>
    <property type="match status" value="1"/>
</dbReference>
<dbReference type="SUPFAM" id="SSF54211">
    <property type="entry name" value="Ribosomal protein S5 domain 2-like"/>
    <property type="match status" value="1"/>
</dbReference>
<dbReference type="PROSITE" id="PS00648">
    <property type="entry name" value="RIBONUCLEASE_P"/>
    <property type="match status" value="1"/>
</dbReference>
<sequence length="117" mass="13652">MLLEKAYRIKKNADFQRIYKKGHSVANRQFVVYTCNNKEIDHFRLGISVSKKLGNAVLRNKIKRAIRENFKVHKSHILAKDIIVIARQPAKDMTTLQIQNSLEHVLKIAKVFNKKIK</sequence>
<gene>
    <name evidence="1" type="primary">rnpA</name>
    <name type="ordered locus">SaurJH9_2735</name>
</gene>
<proteinExistence type="inferred from homology"/>
<organism>
    <name type="scientific">Staphylococcus aureus (strain JH9)</name>
    <dbReference type="NCBI Taxonomy" id="359786"/>
    <lineage>
        <taxon>Bacteria</taxon>
        <taxon>Bacillati</taxon>
        <taxon>Bacillota</taxon>
        <taxon>Bacilli</taxon>
        <taxon>Bacillales</taxon>
        <taxon>Staphylococcaceae</taxon>
        <taxon>Staphylococcus</taxon>
    </lineage>
</organism>
<feature type="chain" id="PRO_1000078210" description="Ribonuclease P protein component">
    <location>
        <begin position="1"/>
        <end position="117"/>
    </location>
</feature>
<protein>
    <recommendedName>
        <fullName evidence="1">Ribonuclease P protein component</fullName>
        <shortName evidence="1">RNase P protein</shortName>
        <shortName evidence="1">RNaseP protein</shortName>
        <ecNumber evidence="1">3.1.26.5</ecNumber>
    </recommendedName>
    <alternativeName>
        <fullName evidence="1">Protein C5</fullName>
    </alternativeName>
</protein>